<feature type="chain" id="PRO_0000351551" description="Protein Churchill">
    <location>
        <begin position="1"/>
        <end position="112"/>
    </location>
</feature>
<feature type="binding site" evidence="1">
    <location>
        <position position="2"/>
    </location>
    <ligand>
        <name>Zn(2+)</name>
        <dbReference type="ChEBI" id="CHEBI:29105"/>
        <label>1</label>
    </ligand>
</feature>
<feature type="binding site" evidence="1">
    <location>
        <position position="5"/>
    </location>
    <ligand>
        <name>Zn(2+)</name>
        <dbReference type="ChEBI" id="CHEBI:29105"/>
        <label>1</label>
    </ligand>
</feature>
<feature type="binding site" evidence="1">
    <location>
        <position position="30"/>
    </location>
    <ligand>
        <name>Zn(2+)</name>
        <dbReference type="ChEBI" id="CHEBI:29105"/>
        <label>1</label>
    </ligand>
</feature>
<feature type="binding site" evidence="1">
    <location>
        <position position="30"/>
    </location>
    <ligand>
        <name>Zn(2+)</name>
        <dbReference type="ChEBI" id="CHEBI:29105"/>
        <label>2</label>
    </ligand>
</feature>
<feature type="binding site" evidence="1">
    <location>
        <position position="33"/>
    </location>
    <ligand>
        <name>Zn(2+)</name>
        <dbReference type="ChEBI" id="CHEBI:29105"/>
        <label>2</label>
    </ligand>
</feature>
<feature type="binding site" evidence="1">
    <location>
        <position position="59"/>
    </location>
    <ligand>
        <name>Zn(2+)</name>
        <dbReference type="ChEBI" id="CHEBI:29105"/>
        <label>3</label>
    </ligand>
</feature>
<feature type="binding site" evidence="1">
    <location>
        <position position="61"/>
    </location>
    <ligand>
        <name>Zn(2+)</name>
        <dbReference type="ChEBI" id="CHEBI:29105"/>
        <label>2</label>
    </ligand>
</feature>
<feature type="binding site" evidence="1">
    <location>
        <position position="64"/>
    </location>
    <ligand>
        <name>Zn(2+)</name>
        <dbReference type="ChEBI" id="CHEBI:29105"/>
        <label>2</label>
    </ligand>
</feature>
<feature type="binding site" evidence="1">
    <location>
        <position position="66"/>
    </location>
    <ligand>
        <name>Zn(2+)</name>
        <dbReference type="ChEBI" id="CHEBI:29105"/>
        <label>1</label>
    </ligand>
</feature>
<feature type="binding site" evidence="1">
    <location>
        <position position="71"/>
    </location>
    <ligand>
        <name>Zn(2+)</name>
        <dbReference type="ChEBI" id="CHEBI:29105"/>
        <label>3</label>
    </ligand>
</feature>
<feature type="binding site" evidence="1">
    <location>
        <position position="88"/>
    </location>
    <ligand>
        <name>Zn(2+)</name>
        <dbReference type="ChEBI" id="CHEBI:29105"/>
        <label>3</label>
    </ligand>
</feature>
<feature type="binding site" evidence="1">
    <location>
        <position position="91"/>
    </location>
    <ligand>
        <name>Zn(2+)</name>
        <dbReference type="ChEBI" id="CHEBI:29105"/>
        <label>3</label>
    </ligand>
</feature>
<protein>
    <recommendedName>
        <fullName>Protein Churchill</fullName>
    </recommendedName>
</protein>
<proteinExistence type="inferred from homology"/>
<sequence>MCVDCVEKEYPNRGNICLESGSFLLNFTGCAVCNKRDFMLITNKSLKEEDGEEIVTYDHLCKNCHHVIARHEYTFSIMDEFQEYTMLCLLCGKAEDTISILPDDPRQMTLLF</sequence>
<gene>
    <name type="primary">CHURC1</name>
</gene>
<name>CHUR_BOVIN</name>
<accession>Q2HJG7</accession>
<dbReference type="EMBL" id="BC105418">
    <property type="protein sequence ID" value="AAI05419.1"/>
    <property type="molecule type" value="mRNA"/>
</dbReference>
<dbReference type="EMBL" id="EH132529">
    <property type="status" value="NOT_ANNOTATED_CDS"/>
    <property type="molecule type" value="mRNA"/>
</dbReference>
<dbReference type="RefSeq" id="NP_001040046.1">
    <property type="nucleotide sequence ID" value="NM_001046581.2"/>
</dbReference>
<dbReference type="SMR" id="Q2HJG7"/>
<dbReference type="FunCoup" id="Q2HJG7">
    <property type="interactions" value="792"/>
</dbReference>
<dbReference type="STRING" id="9913.ENSBTAP00000062757"/>
<dbReference type="PaxDb" id="9913-ENSBTAP00000035640"/>
<dbReference type="GeneID" id="616539"/>
<dbReference type="KEGG" id="bta:616539"/>
<dbReference type="CTD" id="91612"/>
<dbReference type="VEuPathDB" id="HostDB:ENSBTAG00000003469"/>
<dbReference type="eggNOG" id="ENOG502S4AE">
    <property type="taxonomic scope" value="Eukaryota"/>
</dbReference>
<dbReference type="HOGENOM" id="CLU_142022_0_0_1"/>
<dbReference type="InParanoid" id="Q2HJG7"/>
<dbReference type="OrthoDB" id="5954706at2759"/>
<dbReference type="TreeFam" id="TF333004"/>
<dbReference type="Proteomes" id="UP000009136">
    <property type="component" value="Chromosome 10"/>
</dbReference>
<dbReference type="Bgee" id="ENSBTAG00000003469">
    <property type="expression patterns" value="Expressed in oocyte and 109 other cell types or tissues"/>
</dbReference>
<dbReference type="GO" id="GO:0008270">
    <property type="term" value="F:zinc ion binding"/>
    <property type="evidence" value="ECO:0007669"/>
    <property type="project" value="InterPro"/>
</dbReference>
<dbReference type="GO" id="GO:0008543">
    <property type="term" value="P:fibroblast growth factor receptor signaling pathway"/>
    <property type="evidence" value="ECO:0000318"/>
    <property type="project" value="GO_Central"/>
</dbReference>
<dbReference type="GO" id="GO:0045893">
    <property type="term" value="P:positive regulation of DNA-templated transcription"/>
    <property type="evidence" value="ECO:0007669"/>
    <property type="project" value="InterPro"/>
</dbReference>
<dbReference type="FunFam" id="2.60.40.4240:FF:000001">
    <property type="entry name" value="Churchill domain containing 1"/>
    <property type="match status" value="1"/>
</dbReference>
<dbReference type="Gene3D" id="2.60.40.4240">
    <property type="entry name" value="Transcription activator, Churchill"/>
    <property type="match status" value="1"/>
</dbReference>
<dbReference type="InterPro" id="IPR038543">
    <property type="entry name" value="Churchill_sf"/>
</dbReference>
<dbReference type="InterPro" id="IPR009508">
    <property type="entry name" value="Transcrpt_activator_Churchill"/>
</dbReference>
<dbReference type="PANTHER" id="PTHR31931">
    <property type="entry name" value="PROTEIN CHURCHILL"/>
    <property type="match status" value="1"/>
</dbReference>
<dbReference type="PANTHER" id="PTHR31931:SF2">
    <property type="entry name" value="PROTEIN CHURCHILL"/>
    <property type="match status" value="1"/>
</dbReference>
<dbReference type="Pfam" id="PF06573">
    <property type="entry name" value="Churchill"/>
    <property type="match status" value="1"/>
</dbReference>
<comment type="function">
    <text evidence="2 3 4">Transcriptional activator that mediates FGF signaling during neural development (By similarity). Plays a role in the regulation of cell movement (By similarity). Does not bind DNA by itself (By similarity).</text>
</comment>
<comment type="similarity">
    <text evidence="5">Belongs to the Churchill family.</text>
</comment>
<organism>
    <name type="scientific">Bos taurus</name>
    <name type="common">Bovine</name>
    <dbReference type="NCBI Taxonomy" id="9913"/>
    <lineage>
        <taxon>Eukaryota</taxon>
        <taxon>Metazoa</taxon>
        <taxon>Chordata</taxon>
        <taxon>Craniata</taxon>
        <taxon>Vertebrata</taxon>
        <taxon>Euteleostomi</taxon>
        <taxon>Mammalia</taxon>
        <taxon>Eutheria</taxon>
        <taxon>Laurasiatheria</taxon>
        <taxon>Artiodactyla</taxon>
        <taxon>Ruminantia</taxon>
        <taxon>Pecora</taxon>
        <taxon>Bovidae</taxon>
        <taxon>Bovinae</taxon>
        <taxon>Bos</taxon>
    </lineage>
</organism>
<evidence type="ECO:0000250" key="1"/>
<evidence type="ECO:0000250" key="2">
    <source>
        <dbReference type="UniProtKB" id="Q5U3N7"/>
    </source>
</evidence>
<evidence type="ECO:0000250" key="3">
    <source>
        <dbReference type="UniProtKB" id="Q8WUH1"/>
    </source>
</evidence>
<evidence type="ECO:0000250" key="4">
    <source>
        <dbReference type="UniProtKB" id="Q9DFZ3"/>
    </source>
</evidence>
<evidence type="ECO:0000305" key="5"/>
<reference key="1">
    <citation type="submission" date="2005-09" db="EMBL/GenBank/DDBJ databases">
        <authorList>
            <consortium name="NIH - Mammalian Gene Collection (MGC) project"/>
        </authorList>
    </citation>
    <scope>NUCLEOTIDE SEQUENCE [LARGE SCALE MRNA]</scope>
    <source>
        <strain>Hereford</strain>
        <tissue>Hypothalamus</tissue>
    </source>
</reference>
<keyword id="KW-0010">Activator</keyword>
<keyword id="KW-0217">Developmental protein</keyword>
<keyword id="KW-0479">Metal-binding</keyword>
<keyword id="KW-1185">Reference proteome</keyword>
<keyword id="KW-0804">Transcription</keyword>
<keyword id="KW-0805">Transcription regulation</keyword>
<keyword id="KW-0862">Zinc</keyword>